<name>FLHF_TREPA</name>
<comment type="function">
    <text evidence="1">Necessary for flagellar biosynthesis. May be involved in translocation of the flagellum (By similarity).</text>
</comment>
<comment type="subcellular location">
    <subcellularLocation>
        <location evidence="1">Cell membrane</location>
        <topology evidence="1">Peripheral membrane protein</topology>
        <orientation evidence="1">Cytoplasmic side</orientation>
    </subcellularLocation>
</comment>
<comment type="similarity">
    <text evidence="2">Belongs to the GTP-binding SRP family.</text>
</comment>
<organism>
    <name type="scientific">Treponema pallidum (strain Nichols)</name>
    <dbReference type="NCBI Taxonomy" id="243276"/>
    <lineage>
        <taxon>Bacteria</taxon>
        <taxon>Pseudomonadati</taxon>
        <taxon>Spirochaetota</taxon>
        <taxon>Spirochaetia</taxon>
        <taxon>Spirochaetales</taxon>
        <taxon>Treponemataceae</taxon>
        <taxon>Treponema</taxon>
    </lineage>
</organism>
<dbReference type="EMBL" id="U36839">
    <property type="protein sequence ID" value="AAB00551.1"/>
    <property type="molecule type" value="Genomic_DNA"/>
</dbReference>
<dbReference type="EMBL" id="AE000520">
    <property type="protein sequence ID" value="AAC65679.1"/>
    <property type="molecule type" value="Genomic_DNA"/>
</dbReference>
<dbReference type="PIR" id="E71290">
    <property type="entry name" value="E71290"/>
</dbReference>
<dbReference type="RefSeq" id="WP_010882158.1">
    <property type="nucleotide sequence ID" value="NC_021490.2"/>
</dbReference>
<dbReference type="SMR" id="Q56339"/>
<dbReference type="IntAct" id="Q56339">
    <property type="interactions" value="3"/>
</dbReference>
<dbReference type="STRING" id="243276.TP_0713"/>
<dbReference type="EnsemblBacteria" id="AAC65679">
    <property type="protein sequence ID" value="AAC65679"/>
    <property type="gene ID" value="TP_0713"/>
</dbReference>
<dbReference type="GeneID" id="93876482"/>
<dbReference type="KEGG" id="tpa:TP_0713"/>
<dbReference type="KEGG" id="tpw:TPANIC_0713"/>
<dbReference type="eggNOG" id="COG1419">
    <property type="taxonomic scope" value="Bacteria"/>
</dbReference>
<dbReference type="HOGENOM" id="CLU_009301_11_4_12"/>
<dbReference type="OrthoDB" id="9778554at2"/>
<dbReference type="Proteomes" id="UP000000811">
    <property type="component" value="Chromosome"/>
</dbReference>
<dbReference type="GO" id="GO:0005886">
    <property type="term" value="C:plasma membrane"/>
    <property type="evidence" value="ECO:0007669"/>
    <property type="project" value="UniProtKB-SubCell"/>
</dbReference>
<dbReference type="GO" id="GO:0016887">
    <property type="term" value="F:ATP hydrolysis activity"/>
    <property type="evidence" value="ECO:0007669"/>
    <property type="project" value="InterPro"/>
</dbReference>
<dbReference type="GO" id="GO:0005525">
    <property type="term" value="F:GTP binding"/>
    <property type="evidence" value="ECO:0007669"/>
    <property type="project" value="UniProtKB-KW"/>
</dbReference>
<dbReference type="GO" id="GO:0003924">
    <property type="term" value="F:GTPase activity"/>
    <property type="evidence" value="ECO:0007669"/>
    <property type="project" value="InterPro"/>
</dbReference>
<dbReference type="GO" id="GO:0005047">
    <property type="term" value="F:signal recognition particle binding"/>
    <property type="evidence" value="ECO:0007669"/>
    <property type="project" value="TreeGrafter"/>
</dbReference>
<dbReference type="GO" id="GO:0044781">
    <property type="term" value="P:bacterial-type flagellum organization"/>
    <property type="evidence" value="ECO:0007669"/>
    <property type="project" value="UniProtKB-KW"/>
</dbReference>
<dbReference type="GO" id="GO:0015031">
    <property type="term" value="P:protein transport"/>
    <property type="evidence" value="ECO:0007669"/>
    <property type="project" value="UniProtKB-KW"/>
</dbReference>
<dbReference type="GO" id="GO:0006614">
    <property type="term" value="P:SRP-dependent cotranslational protein targeting to membrane"/>
    <property type="evidence" value="ECO:0007669"/>
    <property type="project" value="InterPro"/>
</dbReference>
<dbReference type="CDD" id="cd17873">
    <property type="entry name" value="FlhF"/>
    <property type="match status" value="1"/>
</dbReference>
<dbReference type="FunFam" id="3.40.50.300:FF:000695">
    <property type="entry name" value="Flagellar biosynthesis regulator FlhF"/>
    <property type="match status" value="1"/>
</dbReference>
<dbReference type="Gene3D" id="1.20.120.1380">
    <property type="entry name" value="Flagellar FlhF biosynthesis protein, N domain"/>
    <property type="match status" value="1"/>
</dbReference>
<dbReference type="Gene3D" id="3.40.50.300">
    <property type="entry name" value="P-loop containing nucleotide triphosphate hydrolases"/>
    <property type="match status" value="1"/>
</dbReference>
<dbReference type="InterPro" id="IPR003593">
    <property type="entry name" value="AAA+_ATPase"/>
</dbReference>
<dbReference type="InterPro" id="IPR020006">
    <property type="entry name" value="FlhF"/>
</dbReference>
<dbReference type="InterPro" id="IPR047040">
    <property type="entry name" value="FlhF__GTPase_dom"/>
</dbReference>
<dbReference type="InterPro" id="IPR027417">
    <property type="entry name" value="P-loop_NTPase"/>
</dbReference>
<dbReference type="InterPro" id="IPR000897">
    <property type="entry name" value="SRP54_GTPase_dom"/>
</dbReference>
<dbReference type="NCBIfam" id="TIGR03499">
    <property type="entry name" value="FlhF"/>
    <property type="match status" value="1"/>
</dbReference>
<dbReference type="PANTHER" id="PTHR43134:SF3">
    <property type="entry name" value="FLAGELLAR BIOSYNTHESIS PROTEIN FLHF"/>
    <property type="match status" value="1"/>
</dbReference>
<dbReference type="PANTHER" id="PTHR43134">
    <property type="entry name" value="SIGNAL RECOGNITION PARTICLE RECEPTOR SUBUNIT ALPHA"/>
    <property type="match status" value="1"/>
</dbReference>
<dbReference type="Pfam" id="PF00448">
    <property type="entry name" value="SRP54"/>
    <property type="match status" value="1"/>
</dbReference>
<dbReference type="SMART" id="SM00382">
    <property type="entry name" value="AAA"/>
    <property type="match status" value="1"/>
</dbReference>
<dbReference type="SMART" id="SM00962">
    <property type="entry name" value="SRP54"/>
    <property type="match status" value="1"/>
</dbReference>
<dbReference type="SUPFAM" id="SSF52540">
    <property type="entry name" value="P-loop containing nucleoside triphosphate hydrolases"/>
    <property type="match status" value="2"/>
</dbReference>
<evidence type="ECO:0000250" key="1"/>
<evidence type="ECO:0000305" key="2"/>
<feature type="chain" id="PRO_0000101226" description="Flagellar biosynthesis protein FlhF">
    <location>
        <begin position="1"/>
        <end position="437"/>
    </location>
</feature>
<feature type="binding site" evidence="1">
    <location>
        <begin position="224"/>
        <end position="231"/>
    </location>
    <ligand>
        <name>GTP</name>
        <dbReference type="ChEBI" id="CHEBI:37565"/>
    </ligand>
</feature>
<feature type="binding site" evidence="1">
    <location>
        <begin position="308"/>
        <end position="312"/>
    </location>
    <ligand>
        <name>GTP</name>
        <dbReference type="ChEBI" id="CHEBI:37565"/>
    </ligand>
</feature>
<feature type="binding site" evidence="1">
    <location>
        <begin position="368"/>
        <end position="371"/>
    </location>
    <ligand>
        <name>GTP</name>
        <dbReference type="ChEBI" id="CHEBI:37565"/>
    </ligand>
</feature>
<accession>Q56339</accession>
<keyword id="KW-1005">Bacterial flagellum biogenesis</keyword>
<keyword id="KW-1006">Bacterial flagellum protein export</keyword>
<keyword id="KW-1003">Cell membrane</keyword>
<keyword id="KW-0342">GTP-binding</keyword>
<keyword id="KW-0472">Membrane</keyword>
<keyword id="KW-0547">Nucleotide-binding</keyword>
<keyword id="KW-0653">Protein transport</keyword>
<keyword id="KW-1185">Reference proteome</keyword>
<keyword id="KW-0813">Transport</keyword>
<gene>
    <name type="primary">flhF</name>
    <name type="ordered locus">TP_0713</name>
</gene>
<reference key="1">
    <citation type="journal article" date="1997" name="DNA Seq.">
        <title>Identification and sequences of the Treponema pallidum flhA, flhF, and orf304 genes.</title>
        <authorList>
            <person name="Hardham J.M."/>
            <person name="Frye J.G."/>
            <person name="Young N.R."/>
            <person name="Stamm L.V."/>
        </authorList>
    </citation>
    <scope>NUCLEOTIDE SEQUENCE [GENOMIC DNA]</scope>
    <source>
        <strain>Nichols</strain>
    </source>
</reference>
<reference key="2">
    <citation type="journal article" date="1998" name="Science">
        <title>Complete genome sequence of Treponema pallidum, the syphilis spirochete.</title>
        <authorList>
            <person name="Fraser C.M."/>
            <person name="Norris S.J."/>
            <person name="Weinstock G.M."/>
            <person name="White O."/>
            <person name="Sutton G.G."/>
            <person name="Dodson R.J."/>
            <person name="Gwinn M.L."/>
            <person name="Hickey E.K."/>
            <person name="Clayton R.A."/>
            <person name="Ketchum K.A."/>
            <person name="Sodergren E."/>
            <person name="Hardham J.M."/>
            <person name="McLeod M.P."/>
            <person name="Salzberg S.L."/>
            <person name="Peterson J.D."/>
            <person name="Khalak H.G."/>
            <person name="Richardson D.L."/>
            <person name="Howell J.K."/>
            <person name="Chidambaram M."/>
            <person name="Utterback T.R."/>
            <person name="McDonald L.A."/>
            <person name="Artiach P."/>
            <person name="Bowman C."/>
            <person name="Cotton M.D."/>
            <person name="Fujii C."/>
            <person name="Garland S.A."/>
            <person name="Hatch B."/>
            <person name="Horst K."/>
            <person name="Roberts K.M."/>
            <person name="Sandusky M."/>
            <person name="Weidman J.F."/>
            <person name="Smith H.O."/>
            <person name="Venter J.C."/>
        </authorList>
    </citation>
    <scope>NUCLEOTIDE SEQUENCE [LARGE SCALE GENOMIC DNA]</scope>
    <source>
        <strain>Nichols</strain>
    </source>
</reference>
<protein>
    <recommendedName>
        <fullName>Flagellar biosynthesis protein FlhF</fullName>
    </recommendedName>
    <alternativeName>
        <fullName>Flagella-associated GTP-binding protein</fullName>
    </alternativeName>
</protein>
<sequence length="437" mass="49284">MELLVEVAPTKEKAIEKIRKKYGDRVNILRTQRNNRSFFFGLIERVSVEIFFSVNSGSQSSVHEIPSVQSRTRVSAARVEDTEAEKIKILESAQRINAKIAQQVEPLISAAKEKKTEKVPTSPEAVHALTQTLEGMIQKITNSAPVVIAQELQSIQRIELLLEENDFSFSFIRKSIARLKDELSYHDLESFEKVESTVLRWIIESVHIQVPPICTGTRNIVLVGPTGVGKTTTLAKLAAFYFVTEPKRTGIQPRVKIITTDNFRIGAAFQMERYCELMGLDLCVVQAPVEFLTYMTLYQQETDVVFVDTEGRSPVDGQNIERMVEYFRAVKNFELEVYLTIDAGSKANDLREVFKQYALFEYRALIVTKLDETTSIGNLISALSEARTPITYITTGQTVPSNLEKASVNLLLSKLKGFKLLAEEMGNDYGDYGSKER</sequence>
<proteinExistence type="inferred from homology"/>